<gene>
    <name type="primary">rpl802</name>
    <name type="synonym">rpk37</name>
    <name type="synonym">rpk5b</name>
    <name type="synonym">rpl2b</name>
    <name type="synonym">rpl8-2</name>
    <name type="ORF">SPBC24E9.04</name>
    <name type="ORF">SPBC2F12.07c</name>
</gene>
<comment type="function">
    <text evidence="1">Component of the ribosome, a large ribonucleoprotein complex responsible for the synthesis of proteins in the cell. The small ribosomal subunit (SSU) binds messenger RNAs (mRNAs) and translates the encoded message by selecting cognate aminoacyl-transfer RNA (tRNA) molecules. The large subunit (LSU) contains the ribosomal catalytic site termed the peptidyl transferase center (PTC), which catalyzes the formation of peptide bonds, thereby polymerizing the amino acids delivered by tRNAs into a polypeptide chain. The nascent polypeptides leave the ribosome through a tunnel in the LSU and interact with protein factors that function in enzymatic processing, targeting, and the membrane insertion of nascent chains at the exit of the ribosomal tunnel.</text>
</comment>
<comment type="subunit">
    <text evidence="1">Component of the large ribosomal subunit (LSU). Mature yeast ribosomes consist of a small (40S) and a large (60S) subunit. The 40S small subunit contains 1 molecule of ribosomal RNA (18S rRNA) and at least 33 different proteins. The large 60S subunit contains 3 rRNA molecules (25S, 5.8S and 5S rRNA) and at least 46 different proteins.</text>
</comment>
<comment type="subcellular location">
    <subcellularLocation>
        <location evidence="1">Cytoplasm</location>
    </subcellularLocation>
</comment>
<comment type="miscellaneous">
    <text>There are 3 genes for uL2 in S.pombe.</text>
</comment>
<comment type="similarity">
    <text evidence="2">Belongs to the universal ribosomal protein uL2 family.</text>
</comment>
<comment type="sequence caution" evidence="2">
    <conflict type="frameshift">
        <sequence resource="EMBL-CDS" id="CAA28710"/>
    </conflict>
</comment>
<dbReference type="EMBL" id="X05036">
    <property type="protein sequence ID" value="CAA28710.1"/>
    <property type="status" value="ALT_FRAME"/>
    <property type="molecule type" value="Genomic_DNA"/>
</dbReference>
<dbReference type="EMBL" id="CU329671">
    <property type="protein sequence ID" value="CAB10155.1"/>
    <property type="molecule type" value="Genomic_DNA"/>
</dbReference>
<dbReference type="PIR" id="S07377">
    <property type="entry name" value="S07377"/>
</dbReference>
<dbReference type="PIR" id="T40711">
    <property type="entry name" value="R5ZPD4"/>
</dbReference>
<dbReference type="RefSeq" id="NP_595709.1">
    <property type="nucleotide sequence ID" value="NM_001021606.2"/>
</dbReference>
<dbReference type="RefSeq" id="XP_001713102.1">
    <property type="nucleotide sequence ID" value="XM_001713050.2"/>
</dbReference>
<dbReference type="SMR" id="P0CT71"/>
<dbReference type="FunCoup" id="P0CT71">
    <property type="interactions" value="475"/>
</dbReference>
<dbReference type="STRING" id="284812.P0CT71"/>
<dbReference type="iPTMnet" id="P0CT71"/>
<dbReference type="EnsemblFungi" id="SPAC1F7.13c.1">
    <property type="protein sequence ID" value="SPAC1F7.13c.1:pep"/>
    <property type="gene ID" value="SPAC1F7.13c"/>
</dbReference>
<dbReference type="EnsemblFungi" id="SPBC2F12.07c.1">
    <property type="protein sequence ID" value="SPBC2F12.07c.1:pep"/>
    <property type="gene ID" value="SPBC2F12.07c"/>
</dbReference>
<dbReference type="EnsemblFungi" id="SPBC839.04.1">
    <property type="protein sequence ID" value="SPBC839.04.1:pep"/>
    <property type="gene ID" value="SPBC839.04"/>
</dbReference>
<dbReference type="GeneID" id="2540366"/>
<dbReference type="KEGG" id="spo:2540366"/>
<dbReference type="KEGG" id="spo:2541191"/>
<dbReference type="PomBase" id="SPBC2F12.07c">
    <property type="gene designation" value="rpl802"/>
</dbReference>
<dbReference type="VEuPathDB" id="FungiDB:SPAC1F7.13c"/>
<dbReference type="VEuPathDB" id="FungiDB:SPBC2F12.07c"/>
<dbReference type="VEuPathDB" id="FungiDB:SPBC839.04"/>
<dbReference type="InParanoid" id="P0CT71"/>
<dbReference type="OMA" id="HPYKFKM"/>
<dbReference type="PhylomeDB" id="P0CT71"/>
<dbReference type="Reactome" id="R-SPO-156827">
    <property type="pathway name" value="L13a-mediated translational silencing of Ceruloplasmin expression"/>
</dbReference>
<dbReference type="Reactome" id="R-SPO-1799339">
    <property type="pathway name" value="SRP-dependent cotranslational protein targeting to membrane"/>
</dbReference>
<dbReference type="Reactome" id="R-SPO-72689">
    <property type="pathway name" value="Formation of a pool of free 40S subunits"/>
</dbReference>
<dbReference type="Reactome" id="R-SPO-72706">
    <property type="pathway name" value="GTP hydrolysis and joining of the 60S ribosomal subunit"/>
</dbReference>
<dbReference type="Reactome" id="R-SPO-975956">
    <property type="pathway name" value="Nonsense Mediated Decay (NMD) independent of the Exon Junction Complex (EJC)"/>
</dbReference>
<dbReference type="Reactome" id="R-SPO-975957">
    <property type="pathway name" value="Nonsense Mediated Decay (NMD) enhanced by the Exon Junction Complex (EJC)"/>
</dbReference>
<dbReference type="PRO" id="PR:P0CT71"/>
<dbReference type="Proteomes" id="UP000002485">
    <property type="component" value="Chromosome II"/>
</dbReference>
<dbReference type="GO" id="GO:0022625">
    <property type="term" value="C:cytosolic large ribosomal subunit"/>
    <property type="evidence" value="ECO:0000318"/>
    <property type="project" value="GO_Central"/>
</dbReference>
<dbReference type="GO" id="GO:0003723">
    <property type="term" value="F:RNA binding"/>
    <property type="evidence" value="ECO:0000318"/>
    <property type="project" value="GO_Central"/>
</dbReference>
<dbReference type="GO" id="GO:0019843">
    <property type="term" value="F:rRNA binding"/>
    <property type="evidence" value="ECO:0000255"/>
    <property type="project" value="PomBase"/>
</dbReference>
<dbReference type="GO" id="GO:0003735">
    <property type="term" value="F:structural constituent of ribosome"/>
    <property type="evidence" value="ECO:0000318"/>
    <property type="project" value="GO_Central"/>
</dbReference>
<dbReference type="GO" id="GO:0002181">
    <property type="term" value="P:cytoplasmic translation"/>
    <property type="evidence" value="ECO:0000318"/>
    <property type="project" value="GO_Central"/>
</dbReference>
<dbReference type="FunFam" id="2.40.50.140:FF:000020">
    <property type="entry name" value="60S ribosomal protein L2"/>
    <property type="match status" value="1"/>
</dbReference>
<dbReference type="FunFam" id="4.10.950.10:FF:000002">
    <property type="entry name" value="60S ribosomal protein L2"/>
    <property type="match status" value="1"/>
</dbReference>
<dbReference type="FunFam" id="2.30.30.30:FF:000006">
    <property type="entry name" value="60S ribosomal protein L8"/>
    <property type="match status" value="1"/>
</dbReference>
<dbReference type="Gene3D" id="2.30.30.30">
    <property type="match status" value="1"/>
</dbReference>
<dbReference type="Gene3D" id="2.40.50.140">
    <property type="entry name" value="Nucleic acid-binding proteins"/>
    <property type="match status" value="1"/>
</dbReference>
<dbReference type="Gene3D" id="4.10.950.10">
    <property type="entry name" value="Ribosomal protein L2, domain 3"/>
    <property type="match status" value="1"/>
</dbReference>
<dbReference type="InterPro" id="IPR012340">
    <property type="entry name" value="NA-bd_OB-fold"/>
</dbReference>
<dbReference type="InterPro" id="IPR014722">
    <property type="entry name" value="Rib_uL2_dom2"/>
</dbReference>
<dbReference type="InterPro" id="IPR002171">
    <property type="entry name" value="Ribosomal_uL2"/>
</dbReference>
<dbReference type="InterPro" id="IPR022669">
    <property type="entry name" value="Ribosomal_uL2_C"/>
</dbReference>
<dbReference type="InterPro" id="IPR022671">
    <property type="entry name" value="Ribosomal_uL2_CS"/>
</dbReference>
<dbReference type="InterPro" id="IPR014726">
    <property type="entry name" value="Ribosomal_uL2_dom3"/>
</dbReference>
<dbReference type="InterPro" id="IPR022666">
    <property type="entry name" value="Ribosomal_uL2_RNA-bd_dom"/>
</dbReference>
<dbReference type="InterPro" id="IPR008991">
    <property type="entry name" value="Translation_prot_SH3-like_sf"/>
</dbReference>
<dbReference type="PANTHER" id="PTHR13691:SF16">
    <property type="entry name" value="LARGE RIBOSOMAL SUBUNIT PROTEIN UL2"/>
    <property type="match status" value="1"/>
</dbReference>
<dbReference type="PANTHER" id="PTHR13691">
    <property type="entry name" value="RIBOSOMAL PROTEIN L2"/>
    <property type="match status" value="1"/>
</dbReference>
<dbReference type="Pfam" id="PF00181">
    <property type="entry name" value="Ribosomal_L2"/>
    <property type="match status" value="1"/>
</dbReference>
<dbReference type="Pfam" id="PF03947">
    <property type="entry name" value="Ribosomal_L2_C"/>
    <property type="match status" value="1"/>
</dbReference>
<dbReference type="PIRSF" id="PIRSF002158">
    <property type="entry name" value="Ribosomal_L2"/>
    <property type="match status" value="1"/>
</dbReference>
<dbReference type="SMART" id="SM01383">
    <property type="entry name" value="Ribosomal_L2"/>
    <property type="match status" value="1"/>
</dbReference>
<dbReference type="SMART" id="SM01382">
    <property type="entry name" value="Ribosomal_L2_C"/>
    <property type="match status" value="1"/>
</dbReference>
<dbReference type="SUPFAM" id="SSF50249">
    <property type="entry name" value="Nucleic acid-binding proteins"/>
    <property type="match status" value="1"/>
</dbReference>
<dbReference type="SUPFAM" id="SSF50104">
    <property type="entry name" value="Translation proteins SH3-like domain"/>
    <property type="match status" value="1"/>
</dbReference>
<dbReference type="PROSITE" id="PS00467">
    <property type="entry name" value="RIBOSOMAL_L2"/>
    <property type="match status" value="1"/>
</dbReference>
<keyword id="KW-0963">Cytoplasm</keyword>
<keyword id="KW-1185">Reference proteome</keyword>
<keyword id="KW-0687">Ribonucleoprotein</keyword>
<keyword id="KW-0689">Ribosomal protein</keyword>
<keyword id="KW-0694">RNA-binding</keyword>
<keyword id="KW-0699">rRNA-binding</keyword>
<feature type="chain" id="PRO_0000433415" description="Large ribosomal subunit protein uL2B">
    <location>
        <begin position="1"/>
        <end position="253"/>
    </location>
</feature>
<sequence>MGRVIRAQRKSGGIFQAHTRLRKGAAQLRTLDFAERHGYIRGVVQKIIHDPGRGAPLAKVAFRNPYHYRTDVETFVATEGMYTGQFVYCGKNAALTVGNVLPVGEMPEGTIISNVEEKAGDRGALGRSSGNYVIIVGHDVDTGKTRVKLPSGAKKVVPSSARGVVGIVAGGGRIDKPLLKAGRAFHKYRVKRNCWPRTRGVAMNPVDHPHGGGNHQHVGHSTTVPRQSAPGQKVGLIAARRTGLLRGAAAVEN</sequence>
<organism>
    <name type="scientific">Schizosaccharomyces pombe (strain 972 / ATCC 24843)</name>
    <name type="common">Fission yeast</name>
    <dbReference type="NCBI Taxonomy" id="284812"/>
    <lineage>
        <taxon>Eukaryota</taxon>
        <taxon>Fungi</taxon>
        <taxon>Dikarya</taxon>
        <taxon>Ascomycota</taxon>
        <taxon>Taphrinomycotina</taxon>
        <taxon>Schizosaccharomycetes</taxon>
        <taxon>Schizosaccharomycetales</taxon>
        <taxon>Schizosaccharomycetaceae</taxon>
        <taxon>Schizosaccharomyces</taxon>
    </lineage>
</organism>
<evidence type="ECO:0000250" key="1">
    <source>
        <dbReference type="UniProtKB" id="P0CX46"/>
    </source>
</evidence>
<evidence type="ECO:0000305" key="2"/>
<protein>
    <recommendedName>
        <fullName evidence="2">Large ribosomal subunit protein uL2B</fullName>
    </recommendedName>
    <alternativeName>
        <fullName>60S ribosomal protein L2-B</fullName>
    </alternativeName>
    <alternativeName>
        <fullName>K37</fullName>
    </alternativeName>
    <alternativeName>
        <fullName>K5</fullName>
    </alternativeName>
    <alternativeName>
        <fullName>KD4</fullName>
    </alternativeName>
</protein>
<reference key="1">
    <citation type="journal article" date="1987" name="Nucleic Acids Res.">
        <title>Sequence and regulatory responses of a ribosomal protein gene from the fission yeast Schizosaccharomyces pombe.</title>
        <authorList>
            <person name="Nischt R."/>
            <person name="Gross T."/>
            <person name="Gatermann K.B."/>
            <person name="Swida U."/>
            <person name="Kaeufer N.F."/>
        </authorList>
    </citation>
    <scope>NUCLEOTIDE SEQUENCE [GENOMIC DNA]</scope>
</reference>
<reference key="2">
    <citation type="journal article" date="2002" name="Nature">
        <title>The genome sequence of Schizosaccharomyces pombe.</title>
        <authorList>
            <person name="Wood V."/>
            <person name="Gwilliam R."/>
            <person name="Rajandream M.A."/>
            <person name="Lyne M.H."/>
            <person name="Lyne R."/>
            <person name="Stewart A."/>
            <person name="Sgouros J.G."/>
            <person name="Peat N."/>
            <person name="Hayles J."/>
            <person name="Baker S.G."/>
            <person name="Basham D."/>
            <person name="Bowman S."/>
            <person name="Brooks K."/>
            <person name="Brown D."/>
            <person name="Brown S."/>
            <person name="Chillingworth T."/>
            <person name="Churcher C.M."/>
            <person name="Collins M."/>
            <person name="Connor R."/>
            <person name="Cronin A."/>
            <person name="Davis P."/>
            <person name="Feltwell T."/>
            <person name="Fraser A."/>
            <person name="Gentles S."/>
            <person name="Goble A."/>
            <person name="Hamlin N."/>
            <person name="Harris D.E."/>
            <person name="Hidalgo J."/>
            <person name="Hodgson G."/>
            <person name="Holroyd S."/>
            <person name="Hornsby T."/>
            <person name="Howarth S."/>
            <person name="Huckle E.J."/>
            <person name="Hunt S."/>
            <person name="Jagels K."/>
            <person name="James K.D."/>
            <person name="Jones L."/>
            <person name="Jones M."/>
            <person name="Leather S."/>
            <person name="McDonald S."/>
            <person name="McLean J."/>
            <person name="Mooney P."/>
            <person name="Moule S."/>
            <person name="Mungall K.L."/>
            <person name="Murphy L.D."/>
            <person name="Niblett D."/>
            <person name="Odell C."/>
            <person name="Oliver K."/>
            <person name="O'Neil S."/>
            <person name="Pearson D."/>
            <person name="Quail M.A."/>
            <person name="Rabbinowitsch E."/>
            <person name="Rutherford K.M."/>
            <person name="Rutter S."/>
            <person name="Saunders D."/>
            <person name="Seeger K."/>
            <person name="Sharp S."/>
            <person name="Skelton J."/>
            <person name="Simmonds M.N."/>
            <person name="Squares R."/>
            <person name="Squares S."/>
            <person name="Stevens K."/>
            <person name="Taylor K."/>
            <person name="Taylor R.G."/>
            <person name="Tivey A."/>
            <person name="Walsh S.V."/>
            <person name="Warren T."/>
            <person name="Whitehead S."/>
            <person name="Woodward J.R."/>
            <person name="Volckaert G."/>
            <person name="Aert R."/>
            <person name="Robben J."/>
            <person name="Grymonprez B."/>
            <person name="Weltjens I."/>
            <person name="Vanstreels E."/>
            <person name="Rieger M."/>
            <person name="Schaefer M."/>
            <person name="Mueller-Auer S."/>
            <person name="Gabel C."/>
            <person name="Fuchs M."/>
            <person name="Duesterhoeft A."/>
            <person name="Fritzc C."/>
            <person name="Holzer E."/>
            <person name="Moestl D."/>
            <person name="Hilbert H."/>
            <person name="Borzym K."/>
            <person name="Langer I."/>
            <person name="Beck A."/>
            <person name="Lehrach H."/>
            <person name="Reinhardt R."/>
            <person name="Pohl T.M."/>
            <person name="Eger P."/>
            <person name="Zimmermann W."/>
            <person name="Wedler H."/>
            <person name="Wambutt R."/>
            <person name="Purnelle B."/>
            <person name="Goffeau A."/>
            <person name="Cadieu E."/>
            <person name="Dreano S."/>
            <person name="Gloux S."/>
            <person name="Lelaure V."/>
            <person name="Mottier S."/>
            <person name="Galibert F."/>
            <person name="Aves S.J."/>
            <person name="Xiang Z."/>
            <person name="Hunt C."/>
            <person name="Moore K."/>
            <person name="Hurst S.M."/>
            <person name="Lucas M."/>
            <person name="Rochet M."/>
            <person name="Gaillardin C."/>
            <person name="Tallada V.A."/>
            <person name="Garzon A."/>
            <person name="Thode G."/>
            <person name="Daga R.R."/>
            <person name="Cruzado L."/>
            <person name="Jimenez J."/>
            <person name="Sanchez M."/>
            <person name="del Rey F."/>
            <person name="Benito J."/>
            <person name="Dominguez A."/>
            <person name="Revuelta J.L."/>
            <person name="Moreno S."/>
            <person name="Armstrong J."/>
            <person name="Forsburg S.L."/>
            <person name="Cerutti L."/>
            <person name="Lowe T."/>
            <person name="McCombie W.R."/>
            <person name="Paulsen I."/>
            <person name="Potashkin J."/>
            <person name="Shpakovski G.V."/>
            <person name="Ussery D."/>
            <person name="Barrell B.G."/>
            <person name="Nurse P."/>
        </authorList>
    </citation>
    <scope>NUCLEOTIDE SEQUENCE [LARGE SCALE GENOMIC DNA]</scope>
    <source>
        <strain>972 / ATCC 24843</strain>
    </source>
</reference>
<name>RL2B_SCHPO</name>
<accession>P0CT71</accession>
<accession>P08093</accession>
<accession>P14067</accession>
<accession>P36593</accession>
<accession>Q9UU31</accession>
<proteinExistence type="inferred from homology"/>